<dbReference type="EMBL" id="AK029942">
    <property type="protein sequence ID" value="BAC26691.1"/>
    <property type="status" value="ALT_FRAME"/>
    <property type="molecule type" value="mRNA"/>
</dbReference>
<dbReference type="EMBL" id="AK083583">
    <property type="protein sequence ID" value="BAC38959.1"/>
    <property type="molecule type" value="mRNA"/>
</dbReference>
<dbReference type="EMBL" id="AK140606">
    <property type="protein sequence ID" value="BAE24427.1"/>
    <property type="molecule type" value="mRNA"/>
</dbReference>
<dbReference type="EMBL" id="CH466529">
    <property type="protein sequence ID" value="EDL19476.1"/>
    <property type="molecule type" value="Genomic_DNA"/>
</dbReference>
<dbReference type="EMBL" id="BC051544">
    <property type="protein sequence ID" value="AAH51544.1"/>
    <property type="molecule type" value="mRNA"/>
</dbReference>
<dbReference type="EMBL" id="BC139070">
    <property type="protein sequence ID" value="AAI39071.1"/>
    <property type="molecule type" value="mRNA"/>
</dbReference>
<dbReference type="EMBL" id="BC141201">
    <property type="protein sequence ID" value="AAI41202.1"/>
    <property type="molecule type" value="mRNA"/>
</dbReference>
<dbReference type="CCDS" id="CCDS19707.1"/>
<dbReference type="RefSeq" id="NP_766097.1">
    <property type="nucleotide sequence ID" value="NM_172509.4"/>
</dbReference>
<dbReference type="RefSeq" id="XP_036020874.1">
    <property type="nucleotide sequence ID" value="XM_036164981.1"/>
</dbReference>
<dbReference type="PDB" id="8I79">
    <property type="method" value="EM"/>
    <property type="resolution" value="2.80 A"/>
    <property type="chains" value="A/D/F/G/I=1-289"/>
</dbReference>
<dbReference type="PDBsum" id="8I79"/>
<dbReference type="EMDB" id="EMD-35212"/>
<dbReference type="SMR" id="Q8BJK1"/>
<dbReference type="BioGRID" id="229368">
    <property type="interactions" value="3"/>
</dbReference>
<dbReference type="FunCoup" id="Q8BJK1">
    <property type="interactions" value="1101"/>
</dbReference>
<dbReference type="STRING" id="10090.ENSMUSP00000044568"/>
<dbReference type="iPTMnet" id="Q8BJK1"/>
<dbReference type="PhosphoSitePlus" id="Q8BJK1"/>
<dbReference type="PaxDb" id="10090-ENSMUSP00000044568"/>
<dbReference type="ProteomicsDB" id="269453"/>
<dbReference type="Antibodypedia" id="34857">
    <property type="antibodies" value="121 antibodies from 19 providers"/>
</dbReference>
<dbReference type="DNASU" id="212919"/>
<dbReference type="Ensembl" id="ENSMUST00000040616.9">
    <property type="protein sequence ID" value="ENSMUSP00000044568.3"/>
    <property type="gene ID" value="ENSMUSG00000034110.9"/>
</dbReference>
<dbReference type="GeneID" id="212919"/>
<dbReference type="KEGG" id="mmu:212919"/>
<dbReference type="UCSC" id="uc008zue.1">
    <property type="organism name" value="mouse"/>
</dbReference>
<dbReference type="AGR" id="MGI:2442265"/>
<dbReference type="CTD" id="154881"/>
<dbReference type="MGI" id="MGI:2442265">
    <property type="gene designation" value="Kctd7"/>
</dbReference>
<dbReference type="VEuPathDB" id="HostDB:ENSMUSG00000034110"/>
<dbReference type="eggNOG" id="KOG2723">
    <property type="taxonomic scope" value="Eukaryota"/>
</dbReference>
<dbReference type="GeneTree" id="ENSGT00940000161327"/>
<dbReference type="HOGENOM" id="CLU_070345_1_0_1"/>
<dbReference type="InParanoid" id="Q8BJK1"/>
<dbReference type="OMA" id="IAAEQQC"/>
<dbReference type="OrthoDB" id="2414723at2759"/>
<dbReference type="PhylomeDB" id="Q8BJK1"/>
<dbReference type="TreeFam" id="TF315332"/>
<dbReference type="Reactome" id="R-MMU-8951664">
    <property type="pathway name" value="Neddylation"/>
</dbReference>
<dbReference type="Reactome" id="R-MMU-983168">
    <property type="pathway name" value="Antigen processing: Ubiquitination &amp; Proteasome degradation"/>
</dbReference>
<dbReference type="BioGRID-ORCS" id="212919">
    <property type="hits" value="5 hits in 78 CRISPR screens"/>
</dbReference>
<dbReference type="ChiTaRS" id="Kctd7">
    <property type="organism name" value="mouse"/>
</dbReference>
<dbReference type="PRO" id="PR:Q8BJK1"/>
<dbReference type="Proteomes" id="UP000000589">
    <property type="component" value="Chromosome 5"/>
</dbReference>
<dbReference type="RNAct" id="Q8BJK1">
    <property type="molecule type" value="protein"/>
</dbReference>
<dbReference type="Bgee" id="ENSMUSG00000034110">
    <property type="expression patterns" value="Expressed in spermatocyte and 157 other cell types or tissues"/>
</dbReference>
<dbReference type="ExpressionAtlas" id="Q8BJK1">
    <property type="expression patterns" value="baseline and differential"/>
</dbReference>
<dbReference type="GO" id="GO:0005829">
    <property type="term" value="C:cytosol"/>
    <property type="evidence" value="ECO:0007669"/>
    <property type="project" value="UniProtKB-SubCell"/>
</dbReference>
<dbReference type="GO" id="GO:0005886">
    <property type="term" value="C:plasma membrane"/>
    <property type="evidence" value="ECO:0000314"/>
    <property type="project" value="UniProtKB"/>
</dbReference>
<dbReference type="GO" id="GO:0090461">
    <property type="term" value="P:intracellular glutamate homeostasis"/>
    <property type="evidence" value="ECO:0007669"/>
    <property type="project" value="Ensembl"/>
</dbReference>
<dbReference type="GO" id="GO:0030007">
    <property type="term" value="P:intracellular potassium ion homeostasis"/>
    <property type="evidence" value="ECO:0000315"/>
    <property type="project" value="UniProtKB"/>
</dbReference>
<dbReference type="GO" id="GO:0060081">
    <property type="term" value="P:membrane hyperpolarization"/>
    <property type="evidence" value="ECO:0000315"/>
    <property type="project" value="UniProtKB"/>
</dbReference>
<dbReference type="GO" id="GO:0032411">
    <property type="term" value="P:positive regulation of transporter activity"/>
    <property type="evidence" value="ECO:0000315"/>
    <property type="project" value="UniProtKB"/>
</dbReference>
<dbReference type="GO" id="GO:0051260">
    <property type="term" value="P:protein homooligomerization"/>
    <property type="evidence" value="ECO:0007669"/>
    <property type="project" value="InterPro"/>
</dbReference>
<dbReference type="CDD" id="cd18366">
    <property type="entry name" value="BTB_POZ_KCTD7"/>
    <property type="match status" value="1"/>
</dbReference>
<dbReference type="FunFam" id="3.30.710.10:FF:000046">
    <property type="entry name" value="BTB/POZ domain-containing protein KCTD7 isoform X1"/>
    <property type="match status" value="1"/>
</dbReference>
<dbReference type="Gene3D" id="3.30.710.10">
    <property type="entry name" value="Potassium Channel Kv1.1, Chain A"/>
    <property type="match status" value="1"/>
</dbReference>
<dbReference type="InterPro" id="IPR000210">
    <property type="entry name" value="BTB/POZ_dom"/>
</dbReference>
<dbReference type="InterPro" id="IPR011333">
    <property type="entry name" value="SKP1/BTB/POZ_sf"/>
</dbReference>
<dbReference type="InterPro" id="IPR003131">
    <property type="entry name" value="T1-type_BTB"/>
</dbReference>
<dbReference type="PANTHER" id="PTHR14499:SF122">
    <property type="entry name" value="BTB_POZ DOMAIN-CONTAINING PROTEIN KCTD7"/>
    <property type="match status" value="1"/>
</dbReference>
<dbReference type="PANTHER" id="PTHR14499">
    <property type="entry name" value="POTASSIUM CHANNEL TETRAMERIZATION DOMAIN-CONTAINING"/>
    <property type="match status" value="1"/>
</dbReference>
<dbReference type="Pfam" id="PF02214">
    <property type="entry name" value="BTB_2"/>
    <property type="match status" value="1"/>
</dbReference>
<dbReference type="SMART" id="SM00225">
    <property type="entry name" value="BTB"/>
    <property type="match status" value="1"/>
</dbReference>
<dbReference type="SUPFAM" id="SSF54695">
    <property type="entry name" value="POZ domain"/>
    <property type="match status" value="1"/>
</dbReference>
<accession>Q8BJK1</accession>
<accession>B2RSZ3</accession>
<accession>Q3USA6</accession>
<accession>Q80WW8</accession>
<accession>Q8C0S7</accession>
<sequence length="289" mass="33080">MVVVTGREPDSRHSDGAMSSSEAEDDFLEPATPTATQAGHGLPLLPQEFPEVVPLNIGGAHFTTRLSTLRRYEDTMLAAMFSGRHYIPTDSEGRYFIDRDGTHFGDVLNFLRSGDLPPREHVRAVHKEAQYYAIGPLLEQLENMQPLKGEKVRQAFLGLMPYYKDHLERIVEIARLRAVQRKARFAKLKVCVFKEEMPITPYECPLLNSLRFERSESDGQLFEHHCEVDVSFGPWEAVADVYDLLHCLVTDLSAQGLTVDHQCIGVCDKHLVNHYYCKRPIYEFKITWW</sequence>
<feature type="chain" id="PRO_0000251474" description="BTB/POZ domain-containing protein KCTD7">
    <location>
        <begin position="1"/>
        <end position="289"/>
    </location>
</feature>
<feature type="domain" description="BTB">
    <location>
        <begin position="53"/>
        <end position="141"/>
    </location>
</feature>
<feature type="region of interest" description="Disordered" evidence="2">
    <location>
        <begin position="1"/>
        <end position="42"/>
    </location>
</feature>
<feature type="sequence conflict" description="In Ref. 1; BAE24427." evidence="6" ref="1">
    <original>S</original>
    <variation>C</variation>
    <location>
        <position position="19"/>
    </location>
</feature>
<feature type="sequence conflict" description="In Ref. 1; BAE24427." evidence="6" ref="1">
    <original>S</original>
    <variation>C</variation>
    <location>
        <position position="67"/>
    </location>
</feature>
<feature type="sequence conflict" description="In Ref. 3; AAH51544." evidence="6" ref="3">
    <original>TDS</original>
    <variation>HEA</variation>
    <location>
        <begin position="89"/>
        <end position="91"/>
    </location>
</feature>
<feature type="strand" evidence="7">
    <location>
        <begin position="51"/>
        <end position="57"/>
    </location>
</feature>
<feature type="strand" evidence="7">
    <location>
        <begin position="60"/>
        <end position="65"/>
    </location>
</feature>
<feature type="helix" evidence="7">
    <location>
        <begin position="66"/>
        <end position="69"/>
    </location>
</feature>
<feature type="strand" evidence="7">
    <location>
        <begin position="71"/>
        <end position="75"/>
    </location>
</feature>
<feature type="helix" evidence="7">
    <location>
        <begin position="76"/>
        <end position="80"/>
    </location>
</feature>
<feature type="strand" evidence="7">
    <location>
        <begin position="82"/>
        <end position="85"/>
    </location>
</feature>
<feature type="strand" evidence="7">
    <location>
        <begin position="91"/>
        <end position="93"/>
    </location>
</feature>
<feature type="strand" evidence="7">
    <location>
        <begin position="95"/>
        <end position="97"/>
    </location>
</feature>
<feature type="helix" evidence="7">
    <location>
        <begin position="104"/>
        <end position="112"/>
    </location>
</feature>
<feature type="strand" evidence="7">
    <location>
        <begin position="119"/>
        <end position="121"/>
    </location>
</feature>
<feature type="helix" evidence="7">
    <location>
        <begin position="122"/>
        <end position="132"/>
    </location>
</feature>
<feature type="helix" evidence="7">
    <location>
        <begin position="135"/>
        <end position="142"/>
    </location>
</feature>
<feature type="helix" evidence="7">
    <location>
        <begin position="145"/>
        <end position="157"/>
    </location>
</feature>
<feature type="helix" evidence="7">
    <location>
        <begin position="163"/>
        <end position="181"/>
    </location>
</feature>
<feature type="strand" evidence="7">
    <location>
        <begin position="184"/>
        <end position="192"/>
    </location>
</feature>
<feature type="strand" evidence="7">
    <location>
        <begin position="229"/>
        <end position="232"/>
    </location>
</feature>
<feature type="helix" evidence="7">
    <location>
        <begin position="241"/>
        <end position="254"/>
    </location>
</feature>
<feature type="strand" evidence="7">
    <location>
        <begin position="258"/>
        <end position="263"/>
    </location>
</feature>
<feature type="strand" evidence="7">
    <location>
        <begin position="281"/>
        <end position="287"/>
    </location>
</feature>
<organism>
    <name type="scientific">Mus musculus</name>
    <name type="common">Mouse</name>
    <dbReference type="NCBI Taxonomy" id="10090"/>
    <lineage>
        <taxon>Eukaryota</taxon>
        <taxon>Metazoa</taxon>
        <taxon>Chordata</taxon>
        <taxon>Craniata</taxon>
        <taxon>Vertebrata</taxon>
        <taxon>Euteleostomi</taxon>
        <taxon>Mammalia</taxon>
        <taxon>Eutheria</taxon>
        <taxon>Euarchontoglires</taxon>
        <taxon>Glires</taxon>
        <taxon>Rodentia</taxon>
        <taxon>Myomorpha</taxon>
        <taxon>Muroidea</taxon>
        <taxon>Muridae</taxon>
        <taxon>Murinae</taxon>
        <taxon>Mus</taxon>
        <taxon>Mus</taxon>
    </lineage>
</organism>
<gene>
    <name type="primary">Kctd7</name>
</gene>
<protein>
    <recommendedName>
        <fullName>BTB/POZ domain-containing protein KCTD7</fullName>
    </recommendedName>
</protein>
<keyword id="KW-0002">3D-structure</keyword>
<keyword id="KW-1003">Cell membrane</keyword>
<keyword id="KW-0963">Cytoplasm</keyword>
<keyword id="KW-0472">Membrane</keyword>
<keyword id="KW-1185">Reference proteome</keyword>
<evidence type="ECO:0000250" key="1"/>
<evidence type="ECO:0000256" key="2">
    <source>
        <dbReference type="SAM" id="MobiDB-lite"/>
    </source>
</evidence>
<evidence type="ECO:0000269" key="3">
    <source>
    </source>
</evidence>
<evidence type="ECO:0000269" key="4">
    <source>
    </source>
</evidence>
<evidence type="ECO:0000269" key="5">
    <source>
    </source>
</evidence>
<evidence type="ECO:0000305" key="6"/>
<evidence type="ECO:0007829" key="7">
    <source>
        <dbReference type="PDB" id="8I79"/>
    </source>
</evidence>
<name>KCTD7_MOUSE</name>
<comment type="function">
    <text evidence="3">May be involved in the control of excitability of cortical neurons.</text>
</comment>
<comment type="subunit">
    <text evidence="3">Interacts with CUL3.</text>
</comment>
<comment type="subcellular location">
    <subcellularLocation>
        <location evidence="1">Cell membrane</location>
    </subcellularLocation>
    <subcellularLocation>
        <location evidence="1">Cytoplasm</location>
        <location evidence="1">Cytosol</location>
    </subcellularLocation>
</comment>
<comment type="tissue specificity">
    <text evidence="3 4 5">High expression in brain, particularly in post-mitotic neurons. Expressed in the mitral cells of the olfactory bulbs, the hippocampus, the deep layers of the cerebral cortex and Purkinje cells of the cerebellum. Not detected in astrocytes or microglial cells. Also expressed in heart, liver, spleen and kidney.</text>
</comment>
<comment type="sequence caution" evidence="6">
    <conflict type="frameshift">
        <sequence resource="EMBL-CDS" id="BAC26691"/>
    </conflict>
</comment>
<proteinExistence type="evidence at protein level"/>
<reference key="1">
    <citation type="journal article" date="2005" name="Science">
        <title>The transcriptional landscape of the mammalian genome.</title>
        <authorList>
            <person name="Carninci P."/>
            <person name="Kasukawa T."/>
            <person name="Katayama S."/>
            <person name="Gough J."/>
            <person name="Frith M.C."/>
            <person name="Maeda N."/>
            <person name="Oyama R."/>
            <person name="Ravasi T."/>
            <person name="Lenhard B."/>
            <person name="Wells C."/>
            <person name="Kodzius R."/>
            <person name="Shimokawa K."/>
            <person name="Bajic V.B."/>
            <person name="Brenner S.E."/>
            <person name="Batalov S."/>
            <person name="Forrest A.R."/>
            <person name="Zavolan M."/>
            <person name="Davis M.J."/>
            <person name="Wilming L.G."/>
            <person name="Aidinis V."/>
            <person name="Allen J.E."/>
            <person name="Ambesi-Impiombato A."/>
            <person name="Apweiler R."/>
            <person name="Aturaliya R.N."/>
            <person name="Bailey T.L."/>
            <person name="Bansal M."/>
            <person name="Baxter L."/>
            <person name="Beisel K.W."/>
            <person name="Bersano T."/>
            <person name="Bono H."/>
            <person name="Chalk A.M."/>
            <person name="Chiu K.P."/>
            <person name="Choudhary V."/>
            <person name="Christoffels A."/>
            <person name="Clutterbuck D.R."/>
            <person name="Crowe M.L."/>
            <person name="Dalla E."/>
            <person name="Dalrymple B.P."/>
            <person name="de Bono B."/>
            <person name="Della Gatta G."/>
            <person name="di Bernardo D."/>
            <person name="Down T."/>
            <person name="Engstrom P."/>
            <person name="Fagiolini M."/>
            <person name="Faulkner G."/>
            <person name="Fletcher C.F."/>
            <person name="Fukushima T."/>
            <person name="Furuno M."/>
            <person name="Futaki S."/>
            <person name="Gariboldi M."/>
            <person name="Georgii-Hemming P."/>
            <person name="Gingeras T.R."/>
            <person name="Gojobori T."/>
            <person name="Green R.E."/>
            <person name="Gustincich S."/>
            <person name="Harbers M."/>
            <person name="Hayashi Y."/>
            <person name="Hensch T.K."/>
            <person name="Hirokawa N."/>
            <person name="Hill D."/>
            <person name="Huminiecki L."/>
            <person name="Iacono M."/>
            <person name="Ikeo K."/>
            <person name="Iwama A."/>
            <person name="Ishikawa T."/>
            <person name="Jakt M."/>
            <person name="Kanapin A."/>
            <person name="Katoh M."/>
            <person name="Kawasawa Y."/>
            <person name="Kelso J."/>
            <person name="Kitamura H."/>
            <person name="Kitano H."/>
            <person name="Kollias G."/>
            <person name="Krishnan S.P."/>
            <person name="Kruger A."/>
            <person name="Kummerfeld S.K."/>
            <person name="Kurochkin I.V."/>
            <person name="Lareau L.F."/>
            <person name="Lazarevic D."/>
            <person name="Lipovich L."/>
            <person name="Liu J."/>
            <person name="Liuni S."/>
            <person name="McWilliam S."/>
            <person name="Madan Babu M."/>
            <person name="Madera M."/>
            <person name="Marchionni L."/>
            <person name="Matsuda H."/>
            <person name="Matsuzawa S."/>
            <person name="Miki H."/>
            <person name="Mignone F."/>
            <person name="Miyake S."/>
            <person name="Morris K."/>
            <person name="Mottagui-Tabar S."/>
            <person name="Mulder N."/>
            <person name="Nakano N."/>
            <person name="Nakauchi H."/>
            <person name="Ng P."/>
            <person name="Nilsson R."/>
            <person name="Nishiguchi S."/>
            <person name="Nishikawa S."/>
            <person name="Nori F."/>
            <person name="Ohara O."/>
            <person name="Okazaki Y."/>
            <person name="Orlando V."/>
            <person name="Pang K.C."/>
            <person name="Pavan W.J."/>
            <person name="Pavesi G."/>
            <person name="Pesole G."/>
            <person name="Petrovsky N."/>
            <person name="Piazza S."/>
            <person name="Reed J."/>
            <person name="Reid J.F."/>
            <person name="Ring B.Z."/>
            <person name="Ringwald M."/>
            <person name="Rost B."/>
            <person name="Ruan Y."/>
            <person name="Salzberg S.L."/>
            <person name="Sandelin A."/>
            <person name="Schneider C."/>
            <person name="Schoenbach C."/>
            <person name="Sekiguchi K."/>
            <person name="Semple C.A."/>
            <person name="Seno S."/>
            <person name="Sessa L."/>
            <person name="Sheng Y."/>
            <person name="Shibata Y."/>
            <person name="Shimada H."/>
            <person name="Shimada K."/>
            <person name="Silva D."/>
            <person name="Sinclair B."/>
            <person name="Sperling S."/>
            <person name="Stupka E."/>
            <person name="Sugiura K."/>
            <person name="Sultana R."/>
            <person name="Takenaka Y."/>
            <person name="Taki K."/>
            <person name="Tammoja K."/>
            <person name="Tan S.L."/>
            <person name="Tang S."/>
            <person name="Taylor M.S."/>
            <person name="Tegner J."/>
            <person name="Teichmann S.A."/>
            <person name="Ueda H.R."/>
            <person name="van Nimwegen E."/>
            <person name="Verardo R."/>
            <person name="Wei C.L."/>
            <person name="Yagi K."/>
            <person name="Yamanishi H."/>
            <person name="Zabarovsky E."/>
            <person name="Zhu S."/>
            <person name="Zimmer A."/>
            <person name="Hide W."/>
            <person name="Bult C."/>
            <person name="Grimmond S.M."/>
            <person name="Teasdale R.D."/>
            <person name="Liu E.T."/>
            <person name="Brusic V."/>
            <person name="Quackenbush J."/>
            <person name="Wahlestedt C."/>
            <person name="Mattick J.S."/>
            <person name="Hume D.A."/>
            <person name="Kai C."/>
            <person name="Sasaki D."/>
            <person name="Tomaru Y."/>
            <person name="Fukuda S."/>
            <person name="Kanamori-Katayama M."/>
            <person name="Suzuki M."/>
            <person name="Aoki J."/>
            <person name="Arakawa T."/>
            <person name="Iida J."/>
            <person name="Imamura K."/>
            <person name="Itoh M."/>
            <person name="Kato T."/>
            <person name="Kawaji H."/>
            <person name="Kawagashira N."/>
            <person name="Kawashima T."/>
            <person name="Kojima M."/>
            <person name="Kondo S."/>
            <person name="Konno H."/>
            <person name="Nakano K."/>
            <person name="Ninomiya N."/>
            <person name="Nishio T."/>
            <person name="Okada M."/>
            <person name="Plessy C."/>
            <person name="Shibata K."/>
            <person name="Shiraki T."/>
            <person name="Suzuki S."/>
            <person name="Tagami M."/>
            <person name="Waki K."/>
            <person name="Watahiki A."/>
            <person name="Okamura-Oho Y."/>
            <person name="Suzuki H."/>
            <person name="Kawai J."/>
            <person name="Hayashizaki Y."/>
        </authorList>
    </citation>
    <scope>NUCLEOTIDE SEQUENCE [LARGE SCALE MRNA]</scope>
    <source>
        <strain>C57BL/6J</strain>
        <tissue>Cerebellum</tissue>
        <tissue>Embryo</tissue>
        <tissue>Testis</tissue>
    </source>
</reference>
<reference key="2">
    <citation type="submission" date="2005-09" db="EMBL/GenBank/DDBJ databases">
        <authorList>
            <person name="Mural R.J."/>
            <person name="Adams M.D."/>
            <person name="Myers E.W."/>
            <person name="Smith H.O."/>
            <person name="Venter J.C."/>
        </authorList>
    </citation>
    <scope>NUCLEOTIDE SEQUENCE [LARGE SCALE GENOMIC DNA]</scope>
</reference>
<reference key="3">
    <citation type="journal article" date="2004" name="Genome Res.">
        <title>The status, quality, and expansion of the NIH full-length cDNA project: the Mammalian Gene Collection (MGC).</title>
        <authorList>
            <consortium name="The MGC Project Team"/>
        </authorList>
    </citation>
    <scope>NUCLEOTIDE SEQUENCE [LARGE SCALE MRNA]</scope>
    <source>
        <strain>Czech II</strain>
        <tissue>Lung</tissue>
        <tissue>Testis</tissue>
    </source>
</reference>
<reference key="4">
    <citation type="journal article" date="2011" name="Mol. Neurobiol.">
        <title>Progressive myoclonic epilepsy-associated gene KCTD7 is a regulator of potassium conductance in neurons.</title>
        <authorList>
            <person name="Azizieh R."/>
            <person name="Orduz D."/>
            <person name="Van Bogaert P."/>
            <person name="Bouschet T."/>
            <person name="Rodriguez W."/>
            <person name="Schiffmann S.N."/>
            <person name="Pirson I."/>
            <person name="Abramowicz M.J."/>
        </authorList>
    </citation>
    <scope>FUNCTION</scope>
    <scope>TISSUE SPECIFICITY</scope>
    <scope>INTERACTION WITH CUL3</scope>
</reference>
<reference key="5">
    <citation type="journal article" date="2012" name="Am. J. Hum. Genet.">
        <title>A homozygous mutation in KCTD7 links neuronal ceroid lipofuscinosis to the ubiquitin-proteasome system.</title>
        <authorList>
            <person name="Staropoli J.F."/>
            <person name="Karaa A."/>
            <person name="Lim E.T."/>
            <person name="Kirby A."/>
            <person name="Elbalalesy N."/>
            <person name="Romansky S.G."/>
            <person name="Leydiker K.B."/>
            <person name="Coppel S.H."/>
            <person name="Barone R."/>
            <person name="Xin W."/>
            <person name="MacDonald M.E."/>
            <person name="Abdenur J.E."/>
            <person name="Daly M.J."/>
            <person name="Sims K.B."/>
            <person name="Cotman S.L."/>
        </authorList>
    </citation>
    <scope>TISSUE SPECIFICITY</scope>
</reference>
<reference key="6">
    <citation type="journal article" date="2012" name="J. Med. Genet.">
        <title>Novel mutations consolidate KCTD7 as a progressive myoclonus epilepsy gene.</title>
        <authorList>
            <person name="Kousi M."/>
            <person name="Anttila V."/>
            <person name="Schulz A."/>
            <person name="Calafato S."/>
            <person name="Jakkula E."/>
            <person name="Riesch E."/>
            <person name="Myllykangas L."/>
            <person name="Kalimo H."/>
            <person name="Topcu M."/>
            <person name="Gokben S."/>
            <person name="Alehan F."/>
            <person name="Lemke J.R."/>
            <person name="Alber M."/>
            <person name="Palotie A."/>
            <person name="Kopra O."/>
            <person name="Lehesjoki A.E."/>
        </authorList>
    </citation>
    <scope>TISSUE SPECIFICITY</scope>
</reference>